<protein>
    <recommendedName>
        <fullName>ATP-dependent RNA helicase DBP7</fullName>
        <ecNumber>3.6.4.13</ecNumber>
    </recommendedName>
</protein>
<accession>Q2GZU7</accession>
<proteinExistence type="inferred from homology"/>
<feature type="chain" id="PRO_0000256024" description="ATP-dependent RNA helicase DBP7">
    <location>
        <begin position="1"/>
        <end position="806"/>
    </location>
</feature>
<feature type="domain" description="Helicase ATP-binding" evidence="2">
    <location>
        <begin position="174"/>
        <end position="380"/>
    </location>
</feature>
<feature type="domain" description="Helicase C-terminal" evidence="3">
    <location>
        <begin position="413"/>
        <end position="611"/>
    </location>
</feature>
<feature type="region of interest" description="Disordered" evidence="4">
    <location>
        <begin position="24"/>
        <end position="135"/>
    </location>
</feature>
<feature type="region of interest" description="Disordered" evidence="4">
    <location>
        <begin position="642"/>
        <end position="677"/>
    </location>
</feature>
<feature type="region of interest" description="Disordered" evidence="4">
    <location>
        <begin position="741"/>
        <end position="784"/>
    </location>
</feature>
<feature type="short sequence motif" description="Q motif">
    <location>
        <begin position="141"/>
        <end position="170"/>
    </location>
</feature>
<feature type="short sequence motif" description="DEAD box">
    <location>
        <begin position="309"/>
        <end position="312"/>
    </location>
</feature>
<feature type="compositionally biased region" description="Polar residues" evidence="4">
    <location>
        <begin position="46"/>
        <end position="56"/>
    </location>
</feature>
<feature type="compositionally biased region" description="Basic and acidic residues" evidence="4">
    <location>
        <begin position="69"/>
        <end position="78"/>
    </location>
</feature>
<feature type="compositionally biased region" description="Polar residues" evidence="4">
    <location>
        <begin position="100"/>
        <end position="113"/>
    </location>
</feature>
<feature type="compositionally biased region" description="Gly residues" evidence="4">
    <location>
        <begin position="755"/>
        <end position="768"/>
    </location>
</feature>
<feature type="binding site" evidence="2">
    <location>
        <begin position="187"/>
        <end position="194"/>
    </location>
    <ligand>
        <name>ATP</name>
        <dbReference type="ChEBI" id="CHEBI:30616"/>
    </ligand>
</feature>
<organism>
    <name type="scientific">Chaetomium globosum (strain ATCC 6205 / CBS 148.51 / DSM 1962 / NBRC 6347 / NRRL 1970)</name>
    <name type="common">Soil fungus</name>
    <dbReference type="NCBI Taxonomy" id="306901"/>
    <lineage>
        <taxon>Eukaryota</taxon>
        <taxon>Fungi</taxon>
        <taxon>Dikarya</taxon>
        <taxon>Ascomycota</taxon>
        <taxon>Pezizomycotina</taxon>
        <taxon>Sordariomycetes</taxon>
        <taxon>Sordariomycetidae</taxon>
        <taxon>Sordariales</taxon>
        <taxon>Chaetomiaceae</taxon>
        <taxon>Chaetomium</taxon>
    </lineage>
</organism>
<name>DBP7_CHAGB</name>
<sequence>MADDGMLLNFEIGDAPLKSQVKFKGGRWRDRLKAQRSAKQSHEDGPSSTPPRNRTTVGGYDAGRLGKRPRTEDGESHRYAKVPRTSDAAPKAPSHAMKTGQISSSLFTSNPSAVTDFDQPPAEEEAEPAKASNAPLSEEAENFHSLGVSRRVAQHLATKLEMKAPTAIQKNTVPQLINGDSDAFLQAETGSGKTLAYLLPIVHRIMSLSLNEDGTPKDTKVHRNSGLFAIIMAPTRELCKQISVVLEKVLRCAPWLVCTTVIGGESKKSEKARIRKGVNILIATPGRLADHLDNTKVLNVGTVRWLVLDEGDRMMEMGFEDDIKTIVGKIRADKLEKVNAEGVVLDGVLPSRRVTVLCSATMKMNVQKLGEISLEDAIHIMAAKSESDGDADAVFAAPSQLKQSCIVTPAKLRLVTLIALLKSTFARRGSVMKAIIFISCADSVDFHYQLLKDTKAVEPPTPDSSSTKDRNPHTDTTVARAAYITSPANPKVMLHKLHGSLAQPVRSATLNAFSACKDPAVLITTDISSRGLDVPAVDLVIEYDPAFAVPDHVHRIGRTARAGRAGKAVLFLLPGCEEGYTTILNSSTPIAPQLYESILQKGLASVVNLPSTHTTSETDKQTWSTRAEALQLHLEQRLLANPAGADDDADDNPNPFRGNKGNHNNNTKPKSKQYKPKIDNPLLDAARQAFRSHIRAYATHVREERVYFDILQLHLGHLAKAFALREPPGGIGGGVARRTHTAANKAAAERKSKVSGGGGGGGRVGFGRGAADDDGDGVGAVDEDAARRMREKMRMVMNASSEFNIG</sequence>
<reference key="1">
    <citation type="journal article" date="2015" name="Genome Announc.">
        <title>Draft genome sequence of the cellulolytic fungus Chaetomium globosum.</title>
        <authorList>
            <person name="Cuomo C.A."/>
            <person name="Untereiner W.A."/>
            <person name="Ma L.-J."/>
            <person name="Grabherr M."/>
            <person name="Birren B.W."/>
        </authorList>
    </citation>
    <scope>NUCLEOTIDE SEQUENCE [LARGE SCALE GENOMIC DNA]</scope>
    <source>
        <strain>ATCC 6205 / CBS 148.51 / DSM 1962 / NBRC 6347 / NRRL 1970</strain>
    </source>
</reference>
<evidence type="ECO:0000250" key="1"/>
<evidence type="ECO:0000255" key="2">
    <source>
        <dbReference type="PROSITE-ProRule" id="PRU00541"/>
    </source>
</evidence>
<evidence type="ECO:0000255" key="3">
    <source>
        <dbReference type="PROSITE-ProRule" id="PRU00542"/>
    </source>
</evidence>
<evidence type="ECO:0000256" key="4">
    <source>
        <dbReference type="SAM" id="MobiDB-lite"/>
    </source>
</evidence>
<evidence type="ECO:0000305" key="5"/>
<gene>
    <name type="primary">DBP7</name>
    <name type="ORF">CHGG_04949</name>
</gene>
<keyword id="KW-0067">ATP-binding</keyword>
<keyword id="KW-0347">Helicase</keyword>
<keyword id="KW-0378">Hydrolase</keyword>
<keyword id="KW-0547">Nucleotide-binding</keyword>
<keyword id="KW-0539">Nucleus</keyword>
<keyword id="KW-1185">Reference proteome</keyword>
<keyword id="KW-0690">Ribosome biogenesis</keyword>
<keyword id="KW-0694">RNA-binding</keyword>
<keyword id="KW-0698">rRNA processing</keyword>
<dbReference type="EC" id="3.6.4.13"/>
<dbReference type="EMBL" id="CH408032">
    <property type="protein sequence ID" value="EAQ88330.1"/>
    <property type="molecule type" value="Genomic_DNA"/>
</dbReference>
<dbReference type="RefSeq" id="XP_001224163.1">
    <property type="nucleotide sequence ID" value="XM_001224162.1"/>
</dbReference>
<dbReference type="SMR" id="Q2GZU7"/>
<dbReference type="FunCoup" id="Q2GZU7">
    <property type="interactions" value="658"/>
</dbReference>
<dbReference type="STRING" id="306901.Q2GZU7"/>
<dbReference type="GeneID" id="4392137"/>
<dbReference type="VEuPathDB" id="FungiDB:CHGG_04949"/>
<dbReference type="eggNOG" id="KOG0348">
    <property type="taxonomic scope" value="Eukaryota"/>
</dbReference>
<dbReference type="HOGENOM" id="CLU_003041_26_2_1"/>
<dbReference type="InParanoid" id="Q2GZU7"/>
<dbReference type="OMA" id="AVHIKAD"/>
<dbReference type="OrthoDB" id="422663at2759"/>
<dbReference type="Proteomes" id="UP000001056">
    <property type="component" value="Unassembled WGS sequence"/>
</dbReference>
<dbReference type="GO" id="GO:0005730">
    <property type="term" value="C:nucleolus"/>
    <property type="evidence" value="ECO:0007669"/>
    <property type="project" value="UniProtKB-SubCell"/>
</dbReference>
<dbReference type="GO" id="GO:0005524">
    <property type="term" value="F:ATP binding"/>
    <property type="evidence" value="ECO:0007669"/>
    <property type="project" value="UniProtKB-KW"/>
</dbReference>
<dbReference type="GO" id="GO:0016887">
    <property type="term" value="F:ATP hydrolysis activity"/>
    <property type="evidence" value="ECO:0007669"/>
    <property type="project" value="RHEA"/>
</dbReference>
<dbReference type="GO" id="GO:0003723">
    <property type="term" value="F:RNA binding"/>
    <property type="evidence" value="ECO:0007669"/>
    <property type="project" value="UniProtKB-KW"/>
</dbReference>
<dbReference type="GO" id="GO:0003724">
    <property type="term" value="F:RNA helicase activity"/>
    <property type="evidence" value="ECO:0007669"/>
    <property type="project" value="UniProtKB-EC"/>
</dbReference>
<dbReference type="GO" id="GO:0000464">
    <property type="term" value="P:endonucleolytic cleavage in ITS1 upstream of 5.8S rRNA from tricistronic rRNA transcript (SSU-rRNA, 5.8S rRNA, LSU-rRNA)"/>
    <property type="evidence" value="ECO:0007669"/>
    <property type="project" value="EnsemblFungi"/>
</dbReference>
<dbReference type="CDD" id="cd17949">
    <property type="entry name" value="DEADc_DDX31"/>
    <property type="match status" value="1"/>
</dbReference>
<dbReference type="CDD" id="cd18787">
    <property type="entry name" value="SF2_C_DEAD"/>
    <property type="match status" value="1"/>
</dbReference>
<dbReference type="Gene3D" id="3.40.50.300">
    <property type="entry name" value="P-loop containing nucleotide triphosphate hydrolases"/>
    <property type="match status" value="2"/>
</dbReference>
<dbReference type="InterPro" id="IPR011545">
    <property type="entry name" value="DEAD/DEAH_box_helicase_dom"/>
</dbReference>
<dbReference type="InterPro" id="IPR014001">
    <property type="entry name" value="Helicase_ATP-bd"/>
</dbReference>
<dbReference type="InterPro" id="IPR001650">
    <property type="entry name" value="Helicase_C-like"/>
</dbReference>
<dbReference type="InterPro" id="IPR027417">
    <property type="entry name" value="P-loop_NTPase"/>
</dbReference>
<dbReference type="InterPro" id="IPR025313">
    <property type="entry name" value="SPB4-like_CTE"/>
</dbReference>
<dbReference type="PANTHER" id="PTHR24031">
    <property type="entry name" value="RNA HELICASE"/>
    <property type="match status" value="1"/>
</dbReference>
<dbReference type="Pfam" id="PF13959">
    <property type="entry name" value="CTE_SPB4"/>
    <property type="match status" value="1"/>
</dbReference>
<dbReference type="Pfam" id="PF00270">
    <property type="entry name" value="DEAD"/>
    <property type="match status" value="1"/>
</dbReference>
<dbReference type="Pfam" id="PF00271">
    <property type="entry name" value="Helicase_C"/>
    <property type="match status" value="1"/>
</dbReference>
<dbReference type="SMART" id="SM00487">
    <property type="entry name" value="DEXDc"/>
    <property type="match status" value="1"/>
</dbReference>
<dbReference type="SMART" id="SM01178">
    <property type="entry name" value="DUF4217"/>
    <property type="match status" value="1"/>
</dbReference>
<dbReference type="SMART" id="SM00490">
    <property type="entry name" value="HELICc"/>
    <property type="match status" value="1"/>
</dbReference>
<dbReference type="SUPFAM" id="SSF52540">
    <property type="entry name" value="P-loop containing nucleoside triphosphate hydrolases"/>
    <property type="match status" value="2"/>
</dbReference>
<dbReference type="PROSITE" id="PS51192">
    <property type="entry name" value="HELICASE_ATP_BIND_1"/>
    <property type="match status" value="1"/>
</dbReference>
<dbReference type="PROSITE" id="PS51194">
    <property type="entry name" value="HELICASE_CTER"/>
    <property type="match status" value="1"/>
</dbReference>
<dbReference type="PROSITE" id="PS51195">
    <property type="entry name" value="Q_MOTIF"/>
    <property type="match status" value="1"/>
</dbReference>
<comment type="function">
    <text evidence="1">ATP-binding RNA helicase involved in the biogenesis of 60S ribosomal subunits and is required for the normal formation of 25S and 5.8S rRNAs.</text>
</comment>
<comment type="catalytic activity">
    <reaction>
        <text>ATP + H2O = ADP + phosphate + H(+)</text>
        <dbReference type="Rhea" id="RHEA:13065"/>
        <dbReference type="ChEBI" id="CHEBI:15377"/>
        <dbReference type="ChEBI" id="CHEBI:15378"/>
        <dbReference type="ChEBI" id="CHEBI:30616"/>
        <dbReference type="ChEBI" id="CHEBI:43474"/>
        <dbReference type="ChEBI" id="CHEBI:456216"/>
        <dbReference type="EC" id="3.6.4.13"/>
    </reaction>
</comment>
<comment type="subcellular location">
    <subcellularLocation>
        <location evidence="1">Nucleus</location>
        <location evidence="1">Nucleolus</location>
    </subcellularLocation>
</comment>
<comment type="domain">
    <text>The Q motif is unique to and characteristic of the DEAD box family of RNA helicases and controls ATP binding and hydrolysis.</text>
</comment>
<comment type="similarity">
    <text evidence="5">Belongs to the DEAD box helicase family. DDX31/DBP7 subfamily.</text>
</comment>